<name>NPD_VIBVU</name>
<feature type="chain" id="PRO_0000110370" description="NAD-dependent protein deacylase">
    <location>
        <begin position="1"/>
        <end position="245"/>
    </location>
</feature>
<feature type="domain" description="Deacetylase sirtuin-type" evidence="2">
    <location>
        <begin position="1"/>
        <end position="237"/>
    </location>
</feature>
<feature type="active site" description="Proton acceptor" evidence="1">
    <location>
        <position position="112"/>
    </location>
</feature>
<feature type="binding site" evidence="1">
    <location>
        <begin position="13"/>
        <end position="32"/>
    </location>
    <ligand>
        <name>NAD(+)</name>
        <dbReference type="ChEBI" id="CHEBI:57540"/>
    </ligand>
</feature>
<feature type="binding site" evidence="1">
    <location>
        <position position="57"/>
    </location>
    <ligand>
        <name>substrate</name>
    </ligand>
</feature>
<feature type="binding site" evidence="1">
    <location>
        <position position="60"/>
    </location>
    <ligand>
        <name>substrate</name>
    </ligand>
</feature>
<feature type="binding site" evidence="1">
    <location>
        <begin position="94"/>
        <end position="97"/>
    </location>
    <ligand>
        <name>NAD(+)</name>
        <dbReference type="ChEBI" id="CHEBI:57540"/>
    </ligand>
</feature>
<feature type="binding site" evidence="1">
    <location>
        <position position="120"/>
    </location>
    <ligand>
        <name>Zn(2+)</name>
        <dbReference type="ChEBI" id="CHEBI:29105"/>
    </ligand>
</feature>
<feature type="binding site" evidence="1">
    <location>
        <position position="139"/>
    </location>
    <ligand>
        <name>Zn(2+)</name>
        <dbReference type="ChEBI" id="CHEBI:29105"/>
    </ligand>
</feature>
<feature type="binding site" evidence="1">
    <location>
        <begin position="179"/>
        <end position="181"/>
    </location>
    <ligand>
        <name>NAD(+)</name>
        <dbReference type="ChEBI" id="CHEBI:57540"/>
    </ligand>
</feature>
<feature type="binding site" evidence="1">
    <location>
        <begin position="205"/>
        <end position="207"/>
    </location>
    <ligand>
        <name>NAD(+)</name>
        <dbReference type="ChEBI" id="CHEBI:57540"/>
    </ligand>
</feature>
<feature type="binding site" evidence="1">
    <location>
        <position position="223"/>
    </location>
    <ligand>
        <name>NAD(+)</name>
        <dbReference type="ChEBI" id="CHEBI:57540"/>
    </ligand>
</feature>
<evidence type="ECO:0000255" key="1">
    <source>
        <dbReference type="HAMAP-Rule" id="MF_01121"/>
    </source>
</evidence>
<evidence type="ECO:0000255" key="2">
    <source>
        <dbReference type="PROSITE-ProRule" id="PRU00236"/>
    </source>
</evidence>
<keyword id="KW-0963">Cytoplasm</keyword>
<keyword id="KW-0479">Metal-binding</keyword>
<keyword id="KW-0520">NAD</keyword>
<keyword id="KW-0808">Transferase</keyword>
<keyword id="KW-0862">Zinc</keyword>
<comment type="function">
    <text evidence="1">NAD-dependent lysine deacetylase and desuccinylase that specifically removes acetyl and succinyl groups on target proteins. Modulates the activities of several proteins which are inactive in their acylated form.</text>
</comment>
<comment type="catalytic activity">
    <reaction evidence="1">
        <text>N(6)-acetyl-L-lysyl-[protein] + NAD(+) + H2O = 2''-O-acetyl-ADP-D-ribose + nicotinamide + L-lysyl-[protein]</text>
        <dbReference type="Rhea" id="RHEA:43636"/>
        <dbReference type="Rhea" id="RHEA-COMP:9752"/>
        <dbReference type="Rhea" id="RHEA-COMP:10731"/>
        <dbReference type="ChEBI" id="CHEBI:15377"/>
        <dbReference type="ChEBI" id="CHEBI:17154"/>
        <dbReference type="ChEBI" id="CHEBI:29969"/>
        <dbReference type="ChEBI" id="CHEBI:57540"/>
        <dbReference type="ChEBI" id="CHEBI:61930"/>
        <dbReference type="ChEBI" id="CHEBI:83767"/>
        <dbReference type="EC" id="2.3.1.286"/>
    </reaction>
</comment>
<comment type="catalytic activity">
    <reaction evidence="1">
        <text>N(6)-succinyl-L-lysyl-[protein] + NAD(+) + H2O = 2''-O-succinyl-ADP-D-ribose + nicotinamide + L-lysyl-[protein]</text>
        <dbReference type="Rhea" id="RHEA:47668"/>
        <dbReference type="Rhea" id="RHEA-COMP:9752"/>
        <dbReference type="Rhea" id="RHEA-COMP:11877"/>
        <dbReference type="ChEBI" id="CHEBI:15377"/>
        <dbReference type="ChEBI" id="CHEBI:17154"/>
        <dbReference type="ChEBI" id="CHEBI:29969"/>
        <dbReference type="ChEBI" id="CHEBI:57540"/>
        <dbReference type="ChEBI" id="CHEBI:87830"/>
        <dbReference type="ChEBI" id="CHEBI:87832"/>
    </reaction>
</comment>
<comment type="cofactor">
    <cofactor evidence="1">
        <name>Zn(2+)</name>
        <dbReference type="ChEBI" id="CHEBI:29105"/>
    </cofactor>
    <text evidence="1">Binds 1 zinc ion per subunit.</text>
</comment>
<comment type="subcellular location">
    <subcellularLocation>
        <location evidence="1">Cytoplasm</location>
    </subcellularLocation>
</comment>
<comment type="domain">
    <text evidence="1">2 residues (Tyr-57 and Arg-60) present in a large hydrophobic pocket are probably involved in substrate specificity. They are important for desuccinylation activity, but dispensable for deacetylation activity.</text>
</comment>
<comment type="similarity">
    <text evidence="1">Belongs to the sirtuin family. Class III subfamily.</text>
</comment>
<protein>
    <recommendedName>
        <fullName evidence="1">NAD-dependent protein deacylase</fullName>
        <ecNumber evidence="1">2.3.1.286</ecNumber>
    </recommendedName>
    <alternativeName>
        <fullName evidence="1">Regulatory protein SIR2 homolog</fullName>
    </alternativeName>
</protein>
<reference key="1">
    <citation type="submission" date="2002-12" db="EMBL/GenBank/DDBJ databases">
        <title>Complete genome sequence of Vibrio vulnificus CMCP6.</title>
        <authorList>
            <person name="Rhee J.H."/>
            <person name="Kim S.Y."/>
            <person name="Chung S.S."/>
            <person name="Kim J.J."/>
            <person name="Moon Y.H."/>
            <person name="Jeong H."/>
            <person name="Choy H.E."/>
        </authorList>
    </citation>
    <scope>NUCLEOTIDE SEQUENCE [LARGE SCALE GENOMIC DNA]</scope>
    <source>
        <strain>CMCP6</strain>
    </source>
</reference>
<accession>Q8D9J9</accession>
<proteinExistence type="inferred from homology"/>
<organism>
    <name type="scientific">Vibrio vulnificus (strain CMCP6)</name>
    <dbReference type="NCBI Taxonomy" id="216895"/>
    <lineage>
        <taxon>Bacteria</taxon>
        <taxon>Pseudomonadati</taxon>
        <taxon>Pseudomonadota</taxon>
        <taxon>Gammaproteobacteria</taxon>
        <taxon>Vibrionales</taxon>
        <taxon>Vibrionaceae</taxon>
        <taxon>Vibrio</taxon>
    </lineage>
</organism>
<sequence>MNFPYRNIVVLTGAGISAESGIQTFRAQDGLWENHRIEDVATPEGFARDPDLVQDFYNQRRKKLQDPNIEPNAAHLALGRLEAELDGQVTIVTQNIDNLHERGGNKNIIHMHGELLKSRCSVSNQVIEETGDILTGDLCHCCQMPSQMRPHVVWFGEMPLRMGEIYSALETADLFISIGTSGVVYPAAGFVHDAKMHGAHTIEINLEPSAIESEFVEKRYGKASVEVPKLVEELLAHLESNVESA</sequence>
<gene>
    <name evidence="1" type="primary">cobB</name>
    <name type="ordered locus">VV1_2599</name>
</gene>
<dbReference type="EC" id="2.3.1.286" evidence="1"/>
<dbReference type="EMBL" id="AE016795">
    <property type="protein sequence ID" value="AAO10949.1"/>
    <property type="molecule type" value="Genomic_DNA"/>
</dbReference>
<dbReference type="RefSeq" id="WP_011080447.1">
    <property type="nucleotide sequence ID" value="NC_004459.3"/>
</dbReference>
<dbReference type="SMR" id="Q8D9J9"/>
<dbReference type="KEGG" id="vvu:VV1_2599"/>
<dbReference type="HOGENOM" id="CLU_023643_3_1_6"/>
<dbReference type="Proteomes" id="UP000002275">
    <property type="component" value="Chromosome 1"/>
</dbReference>
<dbReference type="GO" id="GO:0005737">
    <property type="term" value="C:cytoplasm"/>
    <property type="evidence" value="ECO:0007669"/>
    <property type="project" value="UniProtKB-SubCell"/>
</dbReference>
<dbReference type="GO" id="GO:0017136">
    <property type="term" value="F:histone deacetylase activity, NAD-dependent"/>
    <property type="evidence" value="ECO:0007669"/>
    <property type="project" value="TreeGrafter"/>
</dbReference>
<dbReference type="GO" id="GO:0070403">
    <property type="term" value="F:NAD+ binding"/>
    <property type="evidence" value="ECO:0007669"/>
    <property type="project" value="UniProtKB-UniRule"/>
</dbReference>
<dbReference type="GO" id="GO:0036054">
    <property type="term" value="F:protein-malonyllysine demalonylase activity"/>
    <property type="evidence" value="ECO:0007669"/>
    <property type="project" value="InterPro"/>
</dbReference>
<dbReference type="GO" id="GO:0036055">
    <property type="term" value="F:protein-succinyllysine desuccinylase activity"/>
    <property type="evidence" value="ECO:0007669"/>
    <property type="project" value="UniProtKB-UniRule"/>
</dbReference>
<dbReference type="GO" id="GO:0008270">
    <property type="term" value="F:zinc ion binding"/>
    <property type="evidence" value="ECO:0007669"/>
    <property type="project" value="UniProtKB-UniRule"/>
</dbReference>
<dbReference type="CDD" id="cd01412">
    <property type="entry name" value="SIRT5_Af1_CobB"/>
    <property type="match status" value="1"/>
</dbReference>
<dbReference type="Gene3D" id="3.30.1600.10">
    <property type="entry name" value="SIR2/SIRT2 'Small Domain"/>
    <property type="match status" value="1"/>
</dbReference>
<dbReference type="Gene3D" id="3.40.50.1220">
    <property type="entry name" value="TPP-binding domain"/>
    <property type="match status" value="1"/>
</dbReference>
<dbReference type="HAMAP" id="MF_01121">
    <property type="entry name" value="Sirtuin_ClassIII"/>
    <property type="match status" value="1"/>
</dbReference>
<dbReference type="InterPro" id="IPR029035">
    <property type="entry name" value="DHS-like_NAD/FAD-binding_dom"/>
</dbReference>
<dbReference type="InterPro" id="IPR050134">
    <property type="entry name" value="NAD-dep_sirtuin_deacylases"/>
</dbReference>
<dbReference type="InterPro" id="IPR003000">
    <property type="entry name" value="Sirtuin"/>
</dbReference>
<dbReference type="InterPro" id="IPR026591">
    <property type="entry name" value="Sirtuin_cat_small_dom_sf"/>
</dbReference>
<dbReference type="InterPro" id="IPR027546">
    <property type="entry name" value="Sirtuin_class_III"/>
</dbReference>
<dbReference type="InterPro" id="IPR026590">
    <property type="entry name" value="Ssirtuin_cat_dom"/>
</dbReference>
<dbReference type="NCBIfam" id="NF001755">
    <property type="entry name" value="PRK00481.1-5"/>
    <property type="match status" value="1"/>
</dbReference>
<dbReference type="PANTHER" id="PTHR11085:SF4">
    <property type="entry name" value="NAD-DEPENDENT PROTEIN DEACYLASE"/>
    <property type="match status" value="1"/>
</dbReference>
<dbReference type="PANTHER" id="PTHR11085">
    <property type="entry name" value="NAD-DEPENDENT PROTEIN DEACYLASE SIRTUIN-5, MITOCHONDRIAL-RELATED"/>
    <property type="match status" value="1"/>
</dbReference>
<dbReference type="Pfam" id="PF02146">
    <property type="entry name" value="SIR2"/>
    <property type="match status" value="1"/>
</dbReference>
<dbReference type="SUPFAM" id="SSF52467">
    <property type="entry name" value="DHS-like NAD/FAD-binding domain"/>
    <property type="match status" value="1"/>
</dbReference>
<dbReference type="PROSITE" id="PS50305">
    <property type="entry name" value="SIRTUIN"/>
    <property type="match status" value="1"/>
</dbReference>